<proteinExistence type="evidence at transcript level"/>
<evidence type="ECO:0000255" key="1">
    <source>
        <dbReference type="PROSITE-ProRule" id="PRU00108"/>
    </source>
</evidence>
<evidence type="ECO:0000255" key="2">
    <source>
        <dbReference type="PROSITE-ProRule" id="PRU00530"/>
    </source>
</evidence>
<evidence type="ECO:0000256" key="3">
    <source>
        <dbReference type="SAM" id="MobiDB-lite"/>
    </source>
</evidence>
<evidence type="ECO:0000305" key="4"/>
<keyword id="KW-0025">Alternative splicing</keyword>
<keyword id="KW-0217">Developmental protein</keyword>
<keyword id="KW-0238">DNA-binding</keyword>
<keyword id="KW-0371">Homeobox</keyword>
<keyword id="KW-0539">Nucleus</keyword>
<keyword id="KW-1185">Reference proteome</keyword>
<keyword id="KW-0804">Transcription</keyword>
<keyword id="KW-0805">Transcription regulation</keyword>
<protein>
    <recommendedName>
        <fullName>POU domain, class 5, transcription factor 1</fullName>
    </recommendedName>
    <alternativeName>
        <fullName>POU domain protein 2</fullName>
    </alternativeName>
</protein>
<name>PO5F1_DANRE</name>
<accession>Q90270</accession>
<accession>Q90483</accession>
<comment type="function">
    <text>Involved in early development of embryos, especially in the process of gastrulation. May play an important role in establishing and specifying rhombomeric segments. Seems to be required to maintain the cells in a highly undifferentiated state. In contrast to POU2, T-POU2 lacks DNA-binding activity because of its incomplete pou domain structure. Overexpression of POU2 does not have any effect on development, whereas overexpression of t-POU2 causes developmental retardation or arrest before gastrulation.</text>
</comment>
<comment type="subcellular location">
    <subcellularLocation>
        <location>Nucleus</location>
    </subcellularLocation>
</comment>
<comment type="alternative products">
    <event type="alternative splicing"/>
    <isoform>
        <id>Q90270-1</id>
        <name>POU2</name>
        <sequence type="displayed"/>
    </isoform>
    <isoform>
        <id>Q90270-2</id>
        <name>T-POU2</name>
        <sequence type="described" ref="VSP_002337 VSP_002338"/>
    </isoform>
</comment>
<comment type="developmental stage">
    <text>Maternally expressed. Present from the one-cell stage to the gastrula stage. Present in all blastomeres until the midblastula stage. The expression is restricted to the epiblast during gastrulation, and to the neural plate after gastrulation. In the adult, expression is limited to the ovary.</text>
</comment>
<comment type="similarity">
    <text evidence="4">Belongs to the POU transcription factor family. Class-7 subfamily.</text>
</comment>
<feature type="chain" id="PRO_0000100752" description="POU domain, class 5, transcription factor 1">
    <location>
        <begin position="1"/>
        <end position="472"/>
    </location>
</feature>
<feature type="domain" description="POU-specific" evidence="2">
    <location>
        <begin position="249"/>
        <end position="323"/>
    </location>
</feature>
<feature type="DNA-binding region" description="Homeobox" evidence="1">
    <location>
        <begin position="343"/>
        <end position="402"/>
    </location>
</feature>
<feature type="region of interest" description="Disordered" evidence="3">
    <location>
        <begin position="127"/>
        <end position="154"/>
    </location>
</feature>
<feature type="region of interest" description="Disordered" evidence="3">
    <location>
        <begin position="187"/>
        <end position="255"/>
    </location>
</feature>
<feature type="compositionally biased region" description="Polar residues" evidence="3">
    <location>
        <begin position="220"/>
        <end position="234"/>
    </location>
</feature>
<feature type="compositionally biased region" description="Low complexity" evidence="3">
    <location>
        <begin position="235"/>
        <end position="245"/>
    </location>
</feature>
<feature type="compositionally biased region" description="Acidic residues" evidence="3">
    <location>
        <begin position="246"/>
        <end position="255"/>
    </location>
</feature>
<feature type="splice variant" id="VSP_002337" description="In isoform T-POU2." evidence="4">
    <original>VVRVWFCNRRQKGK</original>
    <variation>CVYGSATVDRRESV</variation>
    <location>
        <begin position="386"/>
        <end position="399"/>
    </location>
</feature>
<feature type="splice variant" id="VSP_002338" description="In isoform T-POU2." evidence="4">
    <location>
        <begin position="400"/>
        <end position="472"/>
    </location>
</feature>
<feature type="sequence conflict" description="In Ref. 2; CAA59006." evidence="4" ref="2">
    <original>I</original>
    <variation>V</variation>
    <location>
        <position position="160"/>
    </location>
</feature>
<feature type="sequence conflict" description="In Ref. 2; CAA59006." evidence="4" ref="2">
    <original>N</original>
    <variation>D</variation>
    <location>
        <position position="245"/>
    </location>
</feature>
<feature type="sequence conflict" description="In Ref. 2; CAA59006." evidence="4" ref="2">
    <original>F</original>
    <variation>L</variation>
    <location>
        <position position="462"/>
    </location>
</feature>
<feature type="sequence conflict" description="In Ref. 2; CAA59006." evidence="4" ref="2">
    <original>N</original>
    <variation>T</variation>
    <location>
        <position position="471"/>
    </location>
</feature>
<sequence length="472" mass="51505">MTERAQSPTAADCRPYEVNRAMYPQAAGLDGLGGASLQFAHGMLQDPSLIFNKAHFNGITPATAQTFFPFSGDFKTNDLQGGDFTQPKHWYPFAAPEFTGQVAGATAATQPANISPPIGETREQIKMPSEVKTEKDVEEYGNEENKPPSQYHLTAGTSSIPTGVNYYTPWNPNFWPGLSQITAQANISQAPPTPSASSPSLSPSPPGNGFGSPGFFSGGTAQNIPSAQAQSAPRSSGSSSGGCSNSEEEETLTTEDLEQFAKELKHKRITLGFTQADVGLALGNLYGKMFSQTTICRFEALQLSFKNMCKLKPLLQRWLNEAENSENPQDMYKIERVFVDTRKRKRRTSLEGTVRSALESYFVKCPKPNTLEITHISDDLGLERDVVRVWFCNRRQKGKRLALPFDDECVEAQYYEQSPPPPPHMGGTVLPGQGYPGPAHPGGAPALYMPSLHRPDVFKNGFHPGLVGHLNS</sequence>
<organism>
    <name type="scientific">Danio rerio</name>
    <name type="common">Zebrafish</name>
    <name type="synonym">Brachydanio rerio</name>
    <dbReference type="NCBI Taxonomy" id="7955"/>
    <lineage>
        <taxon>Eukaryota</taxon>
        <taxon>Metazoa</taxon>
        <taxon>Chordata</taxon>
        <taxon>Craniata</taxon>
        <taxon>Vertebrata</taxon>
        <taxon>Euteleostomi</taxon>
        <taxon>Actinopterygii</taxon>
        <taxon>Neopterygii</taxon>
        <taxon>Teleostei</taxon>
        <taxon>Ostariophysi</taxon>
        <taxon>Cypriniformes</taxon>
        <taxon>Danionidae</taxon>
        <taxon>Danioninae</taxon>
        <taxon>Danio</taxon>
    </lineage>
</organism>
<dbReference type="EMBL" id="D28548">
    <property type="protein sequence ID" value="BAA05901.1"/>
    <property type="molecule type" value="mRNA"/>
</dbReference>
<dbReference type="EMBL" id="X84224">
    <property type="protein sequence ID" value="CAA59006.1"/>
    <property type="molecule type" value="mRNA"/>
</dbReference>
<dbReference type="PIR" id="A49836">
    <property type="entry name" value="A49836"/>
</dbReference>
<dbReference type="PIR" id="B49836">
    <property type="entry name" value="B49836"/>
</dbReference>
<dbReference type="RefSeq" id="NP_571187.1">
    <property type="nucleotide sequence ID" value="NM_131112.1"/>
</dbReference>
<dbReference type="SMR" id="Q90270"/>
<dbReference type="FunCoup" id="Q90270">
    <property type="interactions" value="70"/>
</dbReference>
<dbReference type="STRING" id="7955.ENSDARP00000065816"/>
<dbReference type="PaxDb" id="7955-ENSDARP00000065816"/>
<dbReference type="GeneID" id="30333"/>
<dbReference type="KEGG" id="dre:30333"/>
<dbReference type="AGR" id="ZFIN:ZDB-GENE-980526-485"/>
<dbReference type="CTD" id="30333"/>
<dbReference type="ZFIN" id="ZDB-GENE-980526-485">
    <property type="gene designation" value="pou5f3"/>
</dbReference>
<dbReference type="eggNOG" id="KOG3802">
    <property type="taxonomic scope" value="Eukaryota"/>
</dbReference>
<dbReference type="InParanoid" id="Q90270"/>
<dbReference type="OrthoDB" id="6159439at2759"/>
<dbReference type="TreeFam" id="TF316413"/>
<dbReference type="Reactome" id="R-DRE-373752">
    <property type="pathway name" value="Netrin-1 signaling"/>
</dbReference>
<dbReference type="Reactome" id="R-DRE-418885">
    <property type="pathway name" value="DCC mediated attractive signaling"/>
</dbReference>
<dbReference type="Reactome" id="R-DRE-418886">
    <property type="pathway name" value="Netrin mediated repulsion signals"/>
</dbReference>
<dbReference type="PRO" id="PR:Q90270"/>
<dbReference type="Proteomes" id="UP000000437">
    <property type="component" value="Chromosome 21"/>
</dbReference>
<dbReference type="GO" id="GO:0005634">
    <property type="term" value="C:nucleus"/>
    <property type="evidence" value="ECO:0007669"/>
    <property type="project" value="UniProtKB-SubCell"/>
</dbReference>
<dbReference type="GO" id="GO:0003682">
    <property type="term" value="F:chromatin binding"/>
    <property type="evidence" value="ECO:0000314"/>
    <property type="project" value="ZFIN"/>
</dbReference>
<dbReference type="GO" id="GO:0003700">
    <property type="term" value="F:DNA-binding transcription factor activity"/>
    <property type="evidence" value="ECO:0000316"/>
    <property type="project" value="ZFIN"/>
</dbReference>
<dbReference type="GO" id="GO:0000981">
    <property type="term" value="F:DNA-binding transcription factor activity, RNA polymerase II-specific"/>
    <property type="evidence" value="ECO:0000318"/>
    <property type="project" value="GO_Central"/>
</dbReference>
<dbReference type="GO" id="GO:0046982">
    <property type="term" value="F:protein heterodimerization activity"/>
    <property type="evidence" value="ECO:0000353"/>
    <property type="project" value="ZFIN"/>
</dbReference>
<dbReference type="GO" id="GO:0000978">
    <property type="term" value="F:RNA polymerase II cis-regulatory region sequence-specific DNA binding"/>
    <property type="evidence" value="ECO:0000318"/>
    <property type="project" value="GO_Central"/>
</dbReference>
<dbReference type="GO" id="GO:0043565">
    <property type="term" value="F:sequence-specific DNA binding"/>
    <property type="evidence" value="ECO:0000314"/>
    <property type="project" value="ZFIN"/>
</dbReference>
<dbReference type="GO" id="GO:0009653">
    <property type="term" value="P:anatomical structure morphogenesis"/>
    <property type="evidence" value="ECO:0000315"/>
    <property type="project" value="ZFIN"/>
</dbReference>
<dbReference type="GO" id="GO:0007420">
    <property type="term" value="P:brain development"/>
    <property type="evidence" value="ECO:0000315"/>
    <property type="project" value="ZFIN"/>
</dbReference>
<dbReference type="GO" id="GO:0035284">
    <property type="term" value="P:brain segmentation"/>
    <property type="evidence" value="ECO:0000315"/>
    <property type="project" value="ZFIN"/>
</dbReference>
<dbReference type="GO" id="GO:0043697">
    <property type="term" value="P:cell dedifferentiation"/>
    <property type="evidence" value="ECO:0000315"/>
    <property type="project" value="ZFIN"/>
</dbReference>
<dbReference type="GO" id="GO:0006338">
    <property type="term" value="P:chromatin remodeling"/>
    <property type="evidence" value="ECO:0000315"/>
    <property type="project" value="ZFIN"/>
</dbReference>
<dbReference type="GO" id="GO:0009953">
    <property type="term" value="P:dorsal/ventral pattern formation"/>
    <property type="evidence" value="ECO:0000315"/>
    <property type="project" value="ZFIN"/>
</dbReference>
<dbReference type="GO" id="GO:0007398">
    <property type="term" value="P:ectoderm development"/>
    <property type="evidence" value="ECO:0000315"/>
    <property type="project" value="ZFIN"/>
</dbReference>
<dbReference type="GO" id="GO:0009880">
    <property type="term" value="P:embryonic pattern specification"/>
    <property type="evidence" value="ECO:0000315"/>
    <property type="project" value="ZFIN"/>
</dbReference>
<dbReference type="GO" id="GO:0001706">
    <property type="term" value="P:endoderm formation"/>
    <property type="evidence" value="ECO:0000315"/>
    <property type="project" value="ZFIN"/>
</dbReference>
<dbReference type="GO" id="GO:0090504">
    <property type="term" value="P:epiboly"/>
    <property type="evidence" value="ECO:0000315"/>
    <property type="project" value="ZFIN"/>
</dbReference>
<dbReference type="GO" id="GO:0055113">
    <property type="term" value="P:epiboly involved in gastrulation with mouth forming second"/>
    <property type="evidence" value="ECO:0000315"/>
    <property type="project" value="ZFIN"/>
</dbReference>
<dbReference type="GO" id="GO:0031101">
    <property type="term" value="P:fin regeneration"/>
    <property type="evidence" value="ECO:0000315"/>
    <property type="project" value="ZFIN"/>
</dbReference>
<dbReference type="GO" id="GO:0030902">
    <property type="term" value="P:hindbrain development"/>
    <property type="evidence" value="ECO:0000315"/>
    <property type="project" value="ZFIN"/>
</dbReference>
<dbReference type="GO" id="GO:0007498">
    <property type="term" value="P:mesoderm development"/>
    <property type="evidence" value="ECO:0000315"/>
    <property type="project" value="ZFIN"/>
</dbReference>
<dbReference type="GO" id="GO:0030917">
    <property type="term" value="P:midbrain-hindbrain boundary development"/>
    <property type="evidence" value="ECO:0000315"/>
    <property type="project" value="ZFIN"/>
</dbReference>
<dbReference type="GO" id="GO:0016331">
    <property type="term" value="P:morphogenesis of embryonic epithelium"/>
    <property type="evidence" value="ECO:0000315"/>
    <property type="project" value="ZFIN"/>
</dbReference>
<dbReference type="GO" id="GO:0010629">
    <property type="term" value="P:negative regulation of gene expression"/>
    <property type="evidence" value="ECO:0000316"/>
    <property type="project" value="ZFIN"/>
</dbReference>
<dbReference type="GO" id="GO:0034728">
    <property type="term" value="P:nucleosome organization"/>
    <property type="evidence" value="ECO:0000314"/>
    <property type="project" value="ZFIN"/>
</dbReference>
<dbReference type="GO" id="GO:0045893">
    <property type="term" value="P:positive regulation of DNA-templated transcription"/>
    <property type="evidence" value="ECO:0000316"/>
    <property type="project" value="ZFIN"/>
</dbReference>
<dbReference type="GO" id="GO:0042663">
    <property type="term" value="P:regulation of endodermal cell fate specification"/>
    <property type="evidence" value="ECO:0000316"/>
    <property type="project" value="ZFIN"/>
</dbReference>
<dbReference type="GO" id="GO:0010468">
    <property type="term" value="P:regulation of gene expression"/>
    <property type="evidence" value="ECO:0000315"/>
    <property type="project" value="ZFIN"/>
</dbReference>
<dbReference type="GO" id="GO:0006357">
    <property type="term" value="P:regulation of transcription by RNA polymerase II"/>
    <property type="evidence" value="ECO:0000318"/>
    <property type="project" value="GO_Central"/>
</dbReference>
<dbReference type="CDD" id="cd00086">
    <property type="entry name" value="homeodomain"/>
    <property type="match status" value="1"/>
</dbReference>
<dbReference type="FunFam" id="1.10.10.60:FF:000161">
    <property type="entry name" value="POU domain protein"/>
    <property type="match status" value="1"/>
</dbReference>
<dbReference type="FunFam" id="1.10.260.40:FF:000022">
    <property type="entry name" value="POU domain protein"/>
    <property type="match status" value="1"/>
</dbReference>
<dbReference type="Gene3D" id="1.10.10.60">
    <property type="entry name" value="Homeodomain-like"/>
    <property type="match status" value="1"/>
</dbReference>
<dbReference type="Gene3D" id="1.10.260.40">
    <property type="entry name" value="lambda repressor-like DNA-binding domains"/>
    <property type="match status" value="1"/>
</dbReference>
<dbReference type="InterPro" id="IPR001356">
    <property type="entry name" value="HD"/>
</dbReference>
<dbReference type="InterPro" id="IPR017970">
    <property type="entry name" value="Homeobox_CS"/>
</dbReference>
<dbReference type="InterPro" id="IPR009057">
    <property type="entry name" value="Homeodomain-like_sf"/>
</dbReference>
<dbReference type="InterPro" id="IPR010982">
    <property type="entry name" value="Lambda_DNA-bd_dom_sf"/>
</dbReference>
<dbReference type="InterPro" id="IPR013847">
    <property type="entry name" value="POU"/>
</dbReference>
<dbReference type="InterPro" id="IPR000327">
    <property type="entry name" value="POU_dom"/>
</dbReference>
<dbReference type="InterPro" id="IPR050255">
    <property type="entry name" value="POU_domain_TF"/>
</dbReference>
<dbReference type="PANTHER" id="PTHR11636">
    <property type="entry name" value="POU DOMAIN"/>
    <property type="match status" value="1"/>
</dbReference>
<dbReference type="PANTHER" id="PTHR11636:SF128">
    <property type="entry name" value="POU DOMAIN PROTEIN-RELATED"/>
    <property type="match status" value="1"/>
</dbReference>
<dbReference type="Pfam" id="PF00046">
    <property type="entry name" value="Homeodomain"/>
    <property type="match status" value="1"/>
</dbReference>
<dbReference type="Pfam" id="PF00157">
    <property type="entry name" value="Pou"/>
    <property type="match status" value="1"/>
</dbReference>
<dbReference type="PRINTS" id="PR00028">
    <property type="entry name" value="POUDOMAIN"/>
</dbReference>
<dbReference type="SMART" id="SM00389">
    <property type="entry name" value="HOX"/>
    <property type="match status" value="1"/>
</dbReference>
<dbReference type="SMART" id="SM00352">
    <property type="entry name" value="POU"/>
    <property type="match status" value="1"/>
</dbReference>
<dbReference type="SUPFAM" id="SSF46689">
    <property type="entry name" value="Homeodomain-like"/>
    <property type="match status" value="1"/>
</dbReference>
<dbReference type="SUPFAM" id="SSF47413">
    <property type="entry name" value="lambda repressor-like DNA-binding domains"/>
    <property type="match status" value="1"/>
</dbReference>
<dbReference type="PROSITE" id="PS00027">
    <property type="entry name" value="HOMEOBOX_1"/>
    <property type="match status" value="1"/>
</dbReference>
<dbReference type="PROSITE" id="PS50071">
    <property type="entry name" value="HOMEOBOX_2"/>
    <property type="match status" value="1"/>
</dbReference>
<dbReference type="PROSITE" id="PS00035">
    <property type="entry name" value="POU_1"/>
    <property type="match status" value="1"/>
</dbReference>
<dbReference type="PROSITE" id="PS00465">
    <property type="entry name" value="POU_2"/>
    <property type="match status" value="1"/>
</dbReference>
<dbReference type="PROSITE" id="PS51179">
    <property type="entry name" value="POU_3"/>
    <property type="match status" value="1"/>
</dbReference>
<reference key="1">
    <citation type="journal article" date="1994" name="Genes Dev.">
        <title>A novel POU domain gene, zebrafish pou2: expression and roles of two alternatively spliced twin products in early development.</title>
        <authorList>
            <person name="Takeda H."/>
            <person name="Matsuzaki T."/>
            <person name="Oki T."/>
            <person name="Miyagawa T."/>
            <person name="Amanuma H."/>
        </authorList>
    </citation>
    <scope>NUCLEOTIDE SEQUENCE [MRNA]</scope>
    <scope>ALTERNATIVE SPLICING</scope>
    <source>
        <strain>AB</strain>
    </source>
</reference>
<reference key="2">
    <citation type="journal article" date="1995" name="Mech. Dev.">
        <title>Pou-2 -- a zebrafish gene active during cleavage stages and in the early hindbrain.</title>
        <authorList>
            <person name="Hauptmann G."/>
            <person name="Gerster T."/>
        </authorList>
    </citation>
    <scope>NUCLEOTIDE SEQUENCE [MRNA]</scope>
    <source>
        <tissue>Neurula</tissue>
    </source>
</reference>
<gene>
    <name type="primary">pou5f1</name>
    <name type="synonym">gp-9</name>
    <name type="synonym">pou-2</name>
    <name type="synonym">pou2</name>
</gene>